<dbReference type="EMBL" id="X64211">
    <property type="protein sequence ID" value="CAB56811.1"/>
    <property type="molecule type" value="mRNA"/>
</dbReference>
<dbReference type="PIR" id="S22603">
    <property type="entry name" value="S22603"/>
</dbReference>
<dbReference type="SMR" id="P49629"/>
<dbReference type="AGR" id="Xenbase:XB-GENE-967184"/>
<dbReference type="Xenbase" id="XB-GENE-967184">
    <property type="gene designation" value="rpl26l1.L"/>
</dbReference>
<dbReference type="Proteomes" id="UP000186698">
    <property type="component" value="Unplaced"/>
</dbReference>
<dbReference type="GO" id="GO:0005737">
    <property type="term" value="C:cytoplasm"/>
    <property type="evidence" value="ECO:0007669"/>
    <property type="project" value="UniProtKB-SubCell"/>
</dbReference>
<dbReference type="GO" id="GO:0015934">
    <property type="term" value="C:large ribosomal subunit"/>
    <property type="evidence" value="ECO:0007669"/>
    <property type="project" value="InterPro"/>
</dbReference>
<dbReference type="GO" id="GO:0003735">
    <property type="term" value="F:structural constituent of ribosome"/>
    <property type="evidence" value="ECO:0007669"/>
    <property type="project" value="InterPro"/>
</dbReference>
<dbReference type="GO" id="GO:0006412">
    <property type="term" value="P:translation"/>
    <property type="evidence" value="ECO:0007669"/>
    <property type="project" value="InterPro"/>
</dbReference>
<dbReference type="Gene3D" id="2.30.30.30">
    <property type="match status" value="1"/>
</dbReference>
<dbReference type="InterPro" id="IPR014722">
    <property type="entry name" value="Rib_uL2_dom2"/>
</dbReference>
<dbReference type="InterPro" id="IPR005756">
    <property type="entry name" value="Ribosomal_uL24_euk/arc"/>
</dbReference>
<dbReference type="InterPro" id="IPR008991">
    <property type="entry name" value="Translation_prot_SH3-like_sf"/>
</dbReference>
<dbReference type="PANTHER" id="PTHR11143">
    <property type="entry name" value="60S RIBOSOMAL PROTEIN L26 FAMILY MEMBER"/>
    <property type="match status" value="1"/>
</dbReference>
<dbReference type="Pfam" id="PF16906">
    <property type="entry name" value="Ribosomal_L26"/>
    <property type="match status" value="1"/>
</dbReference>
<dbReference type="SUPFAM" id="SSF50104">
    <property type="entry name" value="Translation proteins SH3-like domain"/>
    <property type="match status" value="1"/>
</dbReference>
<feature type="chain" id="PRO_0000130793" description="Large ribosomal subunit protein uL24">
    <location>
        <begin position="1" status="less than"/>
        <end position="33" status="greater than"/>
    </location>
</feature>
<feature type="non-terminal residue">
    <location>
        <position position="1"/>
    </location>
</feature>
<feature type="non-terminal residue">
    <location>
        <position position="33"/>
    </location>
</feature>
<reference key="1">
    <citation type="journal article" date="1992" name="Nucleic Acids Res.">
        <title>Analysis of mRNAs under translational control during Xenopus embryogenesis: isolation of new ribosomal protein clones.</title>
        <authorList>
            <person name="Loreni F."/>
            <person name="Francesconi A."/>
            <person name="Jappelli R."/>
            <person name="Amaldi F."/>
        </authorList>
    </citation>
    <scope>NUCLEOTIDE SEQUENCE [MRNA]</scope>
</reference>
<gene>
    <name type="primary">rpl26</name>
</gene>
<organism>
    <name type="scientific">Xenopus laevis</name>
    <name type="common">African clawed frog</name>
    <dbReference type="NCBI Taxonomy" id="8355"/>
    <lineage>
        <taxon>Eukaryota</taxon>
        <taxon>Metazoa</taxon>
        <taxon>Chordata</taxon>
        <taxon>Craniata</taxon>
        <taxon>Vertebrata</taxon>
        <taxon>Euteleostomi</taxon>
        <taxon>Amphibia</taxon>
        <taxon>Batrachia</taxon>
        <taxon>Anura</taxon>
        <taxon>Pipoidea</taxon>
        <taxon>Pipidae</taxon>
        <taxon>Xenopodinae</taxon>
        <taxon>Xenopus</taxon>
        <taxon>Xenopus</taxon>
    </lineage>
</organism>
<evidence type="ECO:0000250" key="1">
    <source>
        <dbReference type="UniProtKB" id="P61254"/>
    </source>
</evidence>
<evidence type="ECO:0000305" key="2"/>
<proteinExistence type="evidence at transcript level"/>
<comment type="function">
    <text evidence="1">Component of the large ribosomal subunit. The ribosome is a large ribonucleoprotein complex responsible for the synthesis of proteins in the cell.</text>
</comment>
<comment type="subunit">
    <text evidence="1">Component of the large ribosomal subunit.</text>
</comment>
<comment type="subcellular location">
    <subcellularLocation>
        <location evidence="1">Cytoplasm</location>
    </subcellularLocation>
</comment>
<comment type="similarity">
    <text evidence="2">Belongs to the universal ribosomal protein uL24 family.</text>
</comment>
<accession>P49629</accession>
<sequence>PSHVRRKIMSWPLSKELRQKYSVRSMPIRKDDE</sequence>
<keyword id="KW-0963">Cytoplasm</keyword>
<keyword id="KW-1185">Reference proteome</keyword>
<keyword id="KW-0687">Ribonucleoprotein</keyword>
<keyword id="KW-0689">Ribosomal protein</keyword>
<name>RL26_XENLA</name>
<protein>
    <recommendedName>
        <fullName evidence="2">Large ribosomal subunit protein uL24</fullName>
    </recommendedName>
    <alternativeName>
        <fullName>60S ribosomal protein L26</fullName>
    </alternativeName>
</protein>